<reference evidence="7" key="1">
    <citation type="journal article" date="2002" name="Development">
        <title>The bric a brac locus consists of two paralogous genes encoding BTB/POZ domain proteins and acts as a homeotic and morphogenetic regulator of imaginal development in Drosophila.</title>
        <authorList>
            <person name="Couderc J.-L.G."/>
            <person name="Godt D."/>
            <person name="Zollman S."/>
            <person name="Chen J."/>
            <person name="Li M."/>
            <person name="Tiong S."/>
            <person name="Cramton S.E."/>
            <person name="Sahut-Barnola I."/>
            <person name="Laski F.A."/>
        </authorList>
    </citation>
    <scope>NUCLEOTIDE SEQUENCE [MRNA]</scope>
    <scope>FUNCTION</scope>
    <scope>SUBCELLULAR LOCATION</scope>
    <scope>TISSUE SPECIFICITY</scope>
    <source>
        <tissue>Embryo</tissue>
        <tissue>Ovary</tissue>
    </source>
</reference>
<reference evidence="7" key="2">
    <citation type="journal article" date="2000" name="Science">
        <title>The genome sequence of Drosophila melanogaster.</title>
        <authorList>
            <person name="Adams M.D."/>
            <person name="Celniker S.E."/>
            <person name="Holt R.A."/>
            <person name="Evans C.A."/>
            <person name="Gocayne J.D."/>
            <person name="Amanatides P.G."/>
            <person name="Scherer S.E."/>
            <person name="Li P.W."/>
            <person name="Hoskins R.A."/>
            <person name="Galle R.F."/>
            <person name="George R.A."/>
            <person name="Lewis S.E."/>
            <person name="Richards S."/>
            <person name="Ashburner M."/>
            <person name="Henderson S.N."/>
            <person name="Sutton G.G."/>
            <person name="Wortman J.R."/>
            <person name="Yandell M.D."/>
            <person name="Zhang Q."/>
            <person name="Chen L.X."/>
            <person name="Brandon R.C."/>
            <person name="Rogers Y.-H.C."/>
            <person name="Blazej R.G."/>
            <person name="Champe M."/>
            <person name="Pfeiffer B.D."/>
            <person name="Wan K.H."/>
            <person name="Doyle C."/>
            <person name="Baxter E.G."/>
            <person name="Helt G."/>
            <person name="Nelson C.R."/>
            <person name="Miklos G.L.G."/>
            <person name="Abril J.F."/>
            <person name="Agbayani A."/>
            <person name="An H.-J."/>
            <person name="Andrews-Pfannkoch C."/>
            <person name="Baldwin D."/>
            <person name="Ballew R.M."/>
            <person name="Basu A."/>
            <person name="Baxendale J."/>
            <person name="Bayraktaroglu L."/>
            <person name="Beasley E.M."/>
            <person name="Beeson K.Y."/>
            <person name="Benos P.V."/>
            <person name="Berman B.P."/>
            <person name="Bhandari D."/>
            <person name="Bolshakov S."/>
            <person name="Borkova D."/>
            <person name="Botchan M.R."/>
            <person name="Bouck J."/>
            <person name="Brokstein P."/>
            <person name="Brottier P."/>
            <person name="Burtis K.C."/>
            <person name="Busam D.A."/>
            <person name="Butler H."/>
            <person name="Cadieu E."/>
            <person name="Center A."/>
            <person name="Chandra I."/>
            <person name="Cherry J.M."/>
            <person name="Cawley S."/>
            <person name="Dahlke C."/>
            <person name="Davenport L.B."/>
            <person name="Davies P."/>
            <person name="de Pablos B."/>
            <person name="Delcher A."/>
            <person name="Deng Z."/>
            <person name="Mays A.D."/>
            <person name="Dew I."/>
            <person name="Dietz S.M."/>
            <person name="Dodson K."/>
            <person name="Doup L.E."/>
            <person name="Downes M."/>
            <person name="Dugan-Rocha S."/>
            <person name="Dunkov B.C."/>
            <person name="Dunn P."/>
            <person name="Durbin K.J."/>
            <person name="Evangelista C.C."/>
            <person name="Ferraz C."/>
            <person name="Ferriera S."/>
            <person name="Fleischmann W."/>
            <person name="Fosler C."/>
            <person name="Gabrielian A.E."/>
            <person name="Garg N.S."/>
            <person name="Gelbart W.M."/>
            <person name="Glasser K."/>
            <person name="Glodek A."/>
            <person name="Gong F."/>
            <person name="Gorrell J.H."/>
            <person name="Gu Z."/>
            <person name="Guan P."/>
            <person name="Harris M."/>
            <person name="Harris N.L."/>
            <person name="Harvey D.A."/>
            <person name="Heiman T.J."/>
            <person name="Hernandez J.R."/>
            <person name="Houck J."/>
            <person name="Hostin D."/>
            <person name="Houston K.A."/>
            <person name="Howland T.J."/>
            <person name="Wei M.-H."/>
            <person name="Ibegwam C."/>
            <person name="Jalali M."/>
            <person name="Kalush F."/>
            <person name="Karpen G.H."/>
            <person name="Ke Z."/>
            <person name="Kennison J.A."/>
            <person name="Ketchum K.A."/>
            <person name="Kimmel B.E."/>
            <person name="Kodira C.D."/>
            <person name="Kraft C.L."/>
            <person name="Kravitz S."/>
            <person name="Kulp D."/>
            <person name="Lai Z."/>
            <person name="Lasko P."/>
            <person name="Lei Y."/>
            <person name="Levitsky A.A."/>
            <person name="Li J.H."/>
            <person name="Li Z."/>
            <person name="Liang Y."/>
            <person name="Lin X."/>
            <person name="Liu X."/>
            <person name="Mattei B."/>
            <person name="McIntosh T.C."/>
            <person name="McLeod M.P."/>
            <person name="McPherson D."/>
            <person name="Merkulov G."/>
            <person name="Milshina N.V."/>
            <person name="Mobarry C."/>
            <person name="Morris J."/>
            <person name="Moshrefi A."/>
            <person name="Mount S.M."/>
            <person name="Moy M."/>
            <person name="Murphy B."/>
            <person name="Murphy L."/>
            <person name="Muzny D.M."/>
            <person name="Nelson D.L."/>
            <person name="Nelson D.R."/>
            <person name="Nelson K.A."/>
            <person name="Nixon K."/>
            <person name="Nusskern D.R."/>
            <person name="Pacleb J.M."/>
            <person name="Palazzolo M."/>
            <person name="Pittman G.S."/>
            <person name="Pan S."/>
            <person name="Pollard J."/>
            <person name="Puri V."/>
            <person name="Reese M.G."/>
            <person name="Reinert K."/>
            <person name="Remington K."/>
            <person name="Saunders R.D.C."/>
            <person name="Scheeler F."/>
            <person name="Shen H."/>
            <person name="Shue B.C."/>
            <person name="Siden-Kiamos I."/>
            <person name="Simpson M."/>
            <person name="Skupski M.P."/>
            <person name="Smith T.J."/>
            <person name="Spier E."/>
            <person name="Spradling A.C."/>
            <person name="Stapleton M."/>
            <person name="Strong R."/>
            <person name="Sun E."/>
            <person name="Svirskas R."/>
            <person name="Tector C."/>
            <person name="Turner R."/>
            <person name="Venter E."/>
            <person name="Wang A.H."/>
            <person name="Wang X."/>
            <person name="Wang Z.-Y."/>
            <person name="Wassarman D.A."/>
            <person name="Weinstock G.M."/>
            <person name="Weissenbach J."/>
            <person name="Williams S.M."/>
            <person name="Woodage T."/>
            <person name="Worley K.C."/>
            <person name="Wu D."/>
            <person name="Yang S."/>
            <person name="Yao Q.A."/>
            <person name="Ye J."/>
            <person name="Yeh R.-F."/>
            <person name="Zaveri J.S."/>
            <person name="Zhan M."/>
            <person name="Zhang G."/>
            <person name="Zhao Q."/>
            <person name="Zheng L."/>
            <person name="Zheng X.H."/>
            <person name="Zhong F.N."/>
            <person name="Zhong W."/>
            <person name="Zhou X."/>
            <person name="Zhu S.C."/>
            <person name="Zhu X."/>
            <person name="Smith H.O."/>
            <person name="Gibbs R.A."/>
            <person name="Myers E.W."/>
            <person name="Rubin G.M."/>
            <person name="Venter J.C."/>
        </authorList>
    </citation>
    <scope>NUCLEOTIDE SEQUENCE [LARGE SCALE GENOMIC DNA]</scope>
    <source>
        <strain>Berkeley</strain>
    </source>
</reference>
<reference evidence="7" key="3">
    <citation type="journal article" date="2002" name="Genome Biol.">
        <title>Annotation of the Drosophila melanogaster euchromatic genome: a systematic review.</title>
        <authorList>
            <person name="Misra S."/>
            <person name="Crosby M.A."/>
            <person name="Mungall C.J."/>
            <person name="Matthews B.B."/>
            <person name="Campbell K.S."/>
            <person name="Hradecky P."/>
            <person name="Huang Y."/>
            <person name="Kaminker J.S."/>
            <person name="Millburn G.H."/>
            <person name="Prochnik S.E."/>
            <person name="Smith C.D."/>
            <person name="Tupy J.L."/>
            <person name="Whitfield E.J."/>
            <person name="Bayraktaroglu L."/>
            <person name="Berman B.P."/>
            <person name="Bettencourt B.R."/>
            <person name="Celniker S.E."/>
            <person name="de Grey A.D.N.J."/>
            <person name="Drysdale R.A."/>
            <person name="Harris N.L."/>
            <person name="Richter J."/>
            <person name="Russo S."/>
            <person name="Schroeder A.J."/>
            <person name="Shu S.Q."/>
            <person name="Stapleton M."/>
            <person name="Yamada C."/>
            <person name="Ashburner M."/>
            <person name="Gelbart W.M."/>
            <person name="Rubin G.M."/>
            <person name="Lewis S.E."/>
        </authorList>
    </citation>
    <scope>GENOME REANNOTATION</scope>
    <source>
        <strain>Berkeley</strain>
    </source>
</reference>
<reference key="4">
    <citation type="submission" date="2003-08" db="EMBL/GenBank/DDBJ databases">
        <authorList>
            <person name="Stapleton M."/>
            <person name="Brokstein P."/>
            <person name="Hong L."/>
            <person name="Agbayani A."/>
            <person name="Carlson J.W."/>
            <person name="Champe M."/>
            <person name="Chavez C."/>
            <person name="Dorsett V."/>
            <person name="Dresnek D."/>
            <person name="Farfan D."/>
            <person name="Frise E."/>
            <person name="George R.A."/>
            <person name="Gonzalez M."/>
            <person name="Guarin H."/>
            <person name="Kronmiller B."/>
            <person name="Li P.W."/>
            <person name="Liao G."/>
            <person name="Miranda A."/>
            <person name="Mungall C.J."/>
            <person name="Nunoo J."/>
            <person name="Pacleb J.M."/>
            <person name="Paragas V."/>
            <person name="Park S."/>
            <person name="Patel S."/>
            <person name="Phouanenavong S."/>
            <person name="Wan K.H."/>
            <person name="Yu C."/>
            <person name="Lewis S.E."/>
            <person name="Rubin G.M."/>
            <person name="Celniker S.E."/>
        </authorList>
    </citation>
    <scope>NUCLEOTIDE SEQUENCE [LARGE SCALE MRNA]</scope>
    <source>
        <strain>Berkeley</strain>
        <tissue>Embryo</tissue>
    </source>
</reference>
<reference evidence="7" key="5">
    <citation type="journal article" date="1994" name="Proc. Natl. Acad. Sci. U.S.A.">
        <title>The BTB domain, found primarily in zinc finger proteins, defines an evolutionarily conserved family that includes several developmentally regulated genes in Drosophila.</title>
        <authorList>
            <person name="Zollman S."/>
            <person name="Godt D."/>
            <person name="Prive G.G."/>
            <person name="Couderc J.-L."/>
            <person name="Laski F.A."/>
        </authorList>
    </citation>
    <scope>NUCLEOTIDE SEQUENCE [GENOMIC DNA] OF 196-310</scope>
</reference>
<reference key="6">
    <citation type="journal article" date="2008" name="J. Proteome Res.">
        <title>Phosphoproteome analysis of Drosophila melanogaster embryos.</title>
        <authorList>
            <person name="Zhai B."/>
            <person name="Villen J."/>
            <person name="Beausoleil S.A."/>
            <person name="Mintseris J."/>
            <person name="Gygi S.P."/>
        </authorList>
    </citation>
    <scope>PHOSPHORYLATION [LARGE SCALE ANALYSIS] AT TYR-55; SER-56; SER-87; SER-147; SER-377 AND THR-384</scope>
    <scope>IDENTIFICATION BY MASS SPECTROMETRY</scope>
    <source>
        <tissue>Embryo</tissue>
    </source>
</reference>
<evidence type="ECO:0000255" key="1">
    <source>
        <dbReference type="PROSITE-ProRule" id="PRU00037"/>
    </source>
</evidence>
<evidence type="ECO:0000255" key="2">
    <source>
        <dbReference type="PROSITE-ProRule" id="PRU00320"/>
    </source>
</evidence>
<evidence type="ECO:0000256" key="3">
    <source>
        <dbReference type="SAM" id="MobiDB-lite"/>
    </source>
</evidence>
<evidence type="ECO:0000269" key="4">
    <source>
    </source>
</evidence>
<evidence type="ECO:0000269" key="5">
    <source>
    </source>
</evidence>
<evidence type="ECO:0000303" key="6">
    <source>
    </source>
</evidence>
<evidence type="ECO:0000305" key="7"/>
<evidence type="ECO:0000312" key="8">
    <source>
        <dbReference type="EMBL" id="AAF47442.2"/>
    </source>
</evidence>
<dbReference type="EMBL" id="AJ252173">
    <property type="protein sequence ID" value="CAB64388.1"/>
    <property type="molecule type" value="mRNA"/>
</dbReference>
<dbReference type="EMBL" id="AE014296">
    <property type="protein sequence ID" value="AAF47442.2"/>
    <property type="molecule type" value="Genomic_DNA"/>
</dbReference>
<dbReference type="EMBL" id="BT009963">
    <property type="protein sequence ID" value="AAQ22432.1"/>
    <property type="molecule type" value="mRNA"/>
</dbReference>
<dbReference type="EMBL" id="U14399">
    <property type="protein sequence ID" value="AAA50834.1"/>
    <property type="molecule type" value="Genomic_DNA"/>
</dbReference>
<dbReference type="RefSeq" id="NP_523879.2">
    <property type="nucleotide sequence ID" value="NM_079155.3"/>
</dbReference>
<dbReference type="SMR" id="Q9W0K4"/>
<dbReference type="BioGRID" id="68922">
    <property type="interactions" value="7"/>
</dbReference>
<dbReference type="DIP" id="DIP-20101N"/>
<dbReference type="FunCoup" id="Q9W0K4">
    <property type="interactions" value="191"/>
</dbReference>
<dbReference type="IntAct" id="Q9W0K4">
    <property type="interactions" value="2"/>
</dbReference>
<dbReference type="STRING" id="7227.FBpp0072535"/>
<dbReference type="GlyGen" id="Q9W0K4">
    <property type="glycosylation" value="2 sites"/>
</dbReference>
<dbReference type="iPTMnet" id="Q9W0K4"/>
<dbReference type="PaxDb" id="7227-FBpp0072535"/>
<dbReference type="EnsemblMetazoa" id="FBtr0072639">
    <property type="protein sequence ID" value="FBpp0072535"/>
    <property type="gene ID" value="FBgn0025525"/>
</dbReference>
<dbReference type="GeneID" id="44254"/>
<dbReference type="KEGG" id="dme:Dmel_CG9102"/>
<dbReference type="AGR" id="FB:FBgn0025525"/>
<dbReference type="CTD" id="44254"/>
<dbReference type="FlyBase" id="FBgn0025525">
    <property type="gene designation" value="bab2"/>
</dbReference>
<dbReference type="VEuPathDB" id="VectorBase:FBgn0025525"/>
<dbReference type="eggNOG" id="ENOG502RYZ4">
    <property type="taxonomic scope" value="Eukaryota"/>
</dbReference>
<dbReference type="GeneTree" id="ENSGT00940000173981"/>
<dbReference type="HOGENOM" id="CLU_009130_0_0_1"/>
<dbReference type="InParanoid" id="Q9W0K4"/>
<dbReference type="OMA" id="GEMDQFE"/>
<dbReference type="OrthoDB" id="6611570at2759"/>
<dbReference type="PhylomeDB" id="Q9W0K4"/>
<dbReference type="BioGRID-ORCS" id="44254">
    <property type="hits" value="0 hits in 1 CRISPR screen"/>
</dbReference>
<dbReference type="ChiTaRS" id="bab2">
    <property type="organism name" value="fly"/>
</dbReference>
<dbReference type="GenomeRNAi" id="44254"/>
<dbReference type="PRO" id="PR:Q9W0K4"/>
<dbReference type="Proteomes" id="UP000000803">
    <property type="component" value="Chromosome 3L"/>
</dbReference>
<dbReference type="Bgee" id="FBgn0025525">
    <property type="expression patterns" value="Expressed in adult oenocyte (Drosophila) in body wall and 211 other cell types or tissues"/>
</dbReference>
<dbReference type="ExpressionAtlas" id="Q9W0K4">
    <property type="expression patterns" value="baseline and differential"/>
</dbReference>
<dbReference type="GO" id="GO:0005634">
    <property type="term" value="C:nucleus"/>
    <property type="evidence" value="ECO:0000314"/>
    <property type="project" value="FlyBase"/>
</dbReference>
<dbReference type="GO" id="GO:0005700">
    <property type="term" value="C:polytene chromosome"/>
    <property type="evidence" value="ECO:0000314"/>
    <property type="project" value="FlyBase"/>
</dbReference>
<dbReference type="GO" id="GO:0003700">
    <property type="term" value="F:DNA-binding transcription factor activity"/>
    <property type="evidence" value="ECO:0000304"/>
    <property type="project" value="FlyBase"/>
</dbReference>
<dbReference type="GO" id="GO:0003680">
    <property type="term" value="F:minor groove of adenine-thymine-rich DNA binding"/>
    <property type="evidence" value="ECO:0000314"/>
    <property type="project" value="FlyBase"/>
</dbReference>
<dbReference type="GO" id="GO:0007455">
    <property type="term" value="P:eye-antennal disc morphogenesis"/>
    <property type="evidence" value="ECO:0000270"/>
    <property type="project" value="UniProtKB"/>
</dbReference>
<dbReference type="GO" id="GO:0061040">
    <property type="term" value="P:female gonad morphogenesis"/>
    <property type="evidence" value="ECO:0000315"/>
    <property type="project" value="FlyBase"/>
</dbReference>
<dbReference type="GO" id="GO:0007478">
    <property type="term" value="P:leg disc morphogenesis"/>
    <property type="evidence" value="ECO:0000270"/>
    <property type="project" value="UniProtKB"/>
</dbReference>
<dbReference type="GO" id="GO:0006355">
    <property type="term" value="P:regulation of DNA-templated transcription"/>
    <property type="evidence" value="ECO:0000304"/>
    <property type="project" value="UniProtKB"/>
</dbReference>
<dbReference type="GO" id="GO:2000736">
    <property type="term" value="P:regulation of stem cell differentiation"/>
    <property type="evidence" value="ECO:0000315"/>
    <property type="project" value="FlyBase"/>
</dbReference>
<dbReference type="GO" id="GO:0006357">
    <property type="term" value="P:regulation of transcription by RNA polymerase II"/>
    <property type="evidence" value="ECO:0000318"/>
    <property type="project" value="GO_Central"/>
</dbReference>
<dbReference type="CDD" id="cd18315">
    <property type="entry name" value="BTB_POZ_BAB-like"/>
    <property type="match status" value="1"/>
</dbReference>
<dbReference type="FunFam" id="3.30.710.10:FF:000120">
    <property type="entry name" value="Bric a brac 2, isoform B"/>
    <property type="match status" value="1"/>
</dbReference>
<dbReference type="Gene3D" id="3.30.710.10">
    <property type="entry name" value="Potassium Channel Kv1.1, Chain A"/>
    <property type="match status" value="1"/>
</dbReference>
<dbReference type="InterPro" id="IPR000210">
    <property type="entry name" value="BTB/POZ_dom"/>
</dbReference>
<dbReference type="InterPro" id="IPR051095">
    <property type="entry name" value="Dros_DevTransReg"/>
</dbReference>
<dbReference type="InterPro" id="IPR009057">
    <property type="entry name" value="Homeodomain-like_sf"/>
</dbReference>
<dbReference type="InterPro" id="IPR007889">
    <property type="entry name" value="HTH_Psq"/>
</dbReference>
<dbReference type="InterPro" id="IPR011333">
    <property type="entry name" value="SKP1/BTB/POZ_sf"/>
</dbReference>
<dbReference type="PANTHER" id="PTHR23110">
    <property type="entry name" value="BTB DOMAIN TRANSCRIPTION FACTOR"/>
    <property type="match status" value="1"/>
</dbReference>
<dbReference type="PANTHER" id="PTHR23110:SF109">
    <property type="entry name" value="FI07618P-RELATED"/>
    <property type="match status" value="1"/>
</dbReference>
<dbReference type="Pfam" id="PF00651">
    <property type="entry name" value="BTB"/>
    <property type="match status" value="1"/>
</dbReference>
<dbReference type="Pfam" id="PF05225">
    <property type="entry name" value="HTH_psq"/>
    <property type="match status" value="1"/>
</dbReference>
<dbReference type="SMART" id="SM00225">
    <property type="entry name" value="BTB"/>
    <property type="match status" value="1"/>
</dbReference>
<dbReference type="SUPFAM" id="SSF46689">
    <property type="entry name" value="Homeodomain-like"/>
    <property type="match status" value="1"/>
</dbReference>
<dbReference type="SUPFAM" id="SSF54695">
    <property type="entry name" value="POZ domain"/>
    <property type="match status" value="1"/>
</dbReference>
<dbReference type="PROSITE" id="PS50097">
    <property type="entry name" value="BTB"/>
    <property type="match status" value="1"/>
</dbReference>
<dbReference type="PROSITE" id="PS50960">
    <property type="entry name" value="HTH_PSQ"/>
    <property type="match status" value="1"/>
</dbReference>
<sequence length="1067" mass="114662">MDMTKQIVDFEIKSELIGEIDQFEASDYTMAPPEEPKMVEESPQLGHLEDQNRKYSPEREVEPTLQDPSEVVDQMQKDTESVGEVKSPEKDVETELVKSKASPMNDQALTPPPRPLTSSEVVGLRDPEHTELRMCLEAKKSRSLPVSPQPQPNLKLAGSALFEFGQRSSPVETKIKTNPETKPPRRKIVPPSGEGQQFCLRWNNYQSNLTNVFDELLQSESFVDVTLSCEGHSIKAHKMVLSACSPYFQALFYDNPCQHPIIIMRDVSWSDLKALVEFMYKGEINVCQDQINPLLKVAETLKIRGLAEVSAGRGEGGASALPMSAFDDEDEEEELASATAILQQDGDADPDEEMKAKRPRLLPEGVLDLNQRQRKRSRDGSYATPSPSLQGGESEISERGSSGTPGQSQSQPLAMTTSTIVRNPFASPNPQTLEGRNSAMNAVANQRKSPAPTATGHSNGNSGAAMHSPPGGVAVQSALPPHMAAIVPPPPSAMHHHAQQLAAQHQLAHSHAMASALAAAAAGAGAAGAGGAGSGSGSGASAPTGGTGVAGSGAGAAVGSHHDDMEIKPEIAEMIREEERAKMIESGGHGGWMGAAAAATGAASVAADSYQYQLQSMWQKCWNTNQQNLVQQLRFRERGPLKSWRPEAMAEAIFSVLKEGLSLSQAARKFDIPYPTFVLYANRVHNMLGPSLDGGADPRPKARGRPQRILLGMWPEELIRSVIKAVVFRDYREIKEDMSAHQYANGQGHGTYIGGGTTTNGYHSAAAAKLAAQNAALAPPDAGSPLSSMTETLRRQILSQQQQHQQHHQQQAHHQQQPSHHQQQSPHAQSMNMYKSPAYLQRSEIEDQVSAAAAVAAAAAKHQQQQGERRGSENLPDLSALGLMGLPGLNVMPSRGSGGGSGGAAPNSAASYARELSRERERDRERERERELSRQYGSQSRGSSSGSGSAKSLTASQRPGAASPYSAAHYAKHQASAYNKRFLESLPAGIDLEAFANGLLQKSVNKSPRFEDFFPGPGQDMSELFANPDASAAAAAAAYAPPGAIRESPLMKIKLEQQHATELPHED</sequence>
<comment type="function">
    <text evidence="4 6">Probably acts as a transcriptional regulator. Required for the specification of the tarsal segment. Also involved in antenna development.</text>
</comment>
<comment type="subcellular location">
    <subcellularLocation>
        <location evidence="2 4">Nucleus</location>
    </subcellularLocation>
</comment>
<comment type="tissue specificity">
    <text evidence="4">Leg imaginal disk at the central region of the tarsus and in eye antenna disk at the basal cylinder.</text>
</comment>
<comment type="miscellaneous">
    <text>'Bric-a-brac' means 'jumble' in French (referring to the mutant ovary phenotype).</text>
</comment>
<accession>Q9W0K4</accession>
<accession>Q24001</accession>
<accession>Q7YU69</accession>
<accession>Q9U1H3</accession>
<feature type="chain" id="PRO_0000064792" description="Protein bric-a-brac 2">
    <location>
        <begin position="1"/>
        <end position="1067"/>
    </location>
</feature>
<feature type="domain" description="BTB" evidence="1 7">
    <location>
        <begin position="223"/>
        <end position="288"/>
    </location>
</feature>
<feature type="domain" description="HTH psq-type" evidence="2">
    <location>
        <begin position="635"/>
        <end position="687"/>
    </location>
</feature>
<feature type="DNA-binding region" description="H-T-H motif" evidence="2">
    <location>
        <begin position="645"/>
        <end position="690"/>
    </location>
</feature>
<feature type="DNA-binding region" description="A.T hook">
    <location>
        <begin position="697"/>
        <end position="708"/>
    </location>
</feature>
<feature type="region of interest" description="Disordered" evidence="3">
    <location>
        <begin position="30"/>
        <end position="121"/>
    </location>
</feature>
<feature type="region of interest" description="Disordered" evidence="3">
    <location>
        <begin position="312"/>
        <end position="412"/>
    </location>
</feature>
<feature type="region of interest" description="Disordered" evidence="3">
    <location>
        <begin position="444"/>
        <end position="505"/>
    </location>
</feature>
<feature type="region of interest" description="Disordered" evidence="3">
    <location>
        <begin position="525"/>
        <end position="563"/>
    </location>
</feature>
<feature type="region of interest" description="Disordered" evidence="3">
    <location>
        <begin position="796"/>
        <end position="829"/>
    </location>
</feature>
<feature type="region of interest" description="Disordered" evidence="3">
    <location>
        <begin position="860"/>
        <end position="879"/>
    </location>
</feature>
<feature type="region of interest" description="Disordered" evidence="3">
    <location>
        <begin position="891"/>
        <end position="967"/>
    </location>
</feature>
<feature type="compositionally biased region" description="Basic and acidic residues" evidence="3">
    <location>
        <begin position="47"/>
        <end position="62"/>
    </location>
</feature>
<feature type="compositionally biased region" description="Basic and acidic residues" evidence="3">
    <location>
        <begin position="86"/>
        <end position="98"/>
    </location>
</feature>
<feature type="compositionally biased region" description="Acidic residues" evidence="3">
    <location>
        <begin position="326"/>
        <end position="335"/>
    </location>
</feature>
<feature type="compositionally biased region" description="Low complexity" evidence="3">
    <location>
        <begin position="391"/>
        <end position="412"/>
    </location>
</feature>
<feature type="compositionally biased region" description="Gly residues" evidence="3">
    <location>
        <begin position="525"/>
        <end position="538"/>
    </location>
</feature>
<feature type="compositionally biased region" description="Gly residues" evidence="3">
    <location>
        <begin position="545"/>
        <end position="556"/>
    </location>
</feature>
<feature type="compositionally biased region" description="Low complexity" evidence="3">
    <location>
        <begin position="812"/>
        <end position="829"/>
    </location>
</feature>
<feature type="compositionally biased region" description="Low complexity" evidence="3">
    <location>
        <begin position="904"/>
        <end position="914"/>
    </location>
</feature>
<feature type="compositionally biased region" description="Basic and acidic residues" evidence="3">
    <location>
        <begin position="915"/>
        <end position="933"/>
    </location>
</feature>
<feature type="compositionally biased region" description="Low complexity" evidence="3">
    <location>
        <begin position="934"/>
        <end position="949"/>
    </location>
</feature>
<feature type="modified residue" description="Phosphotyrosine" evidence="5">
    <location>
        <position position="55"/>
    </location>
</feature>
<feature type="modified residue" description="Phosphoserine" evidence="5">
    <location>
        <position position="56"/>
    </location>
</feature>
<feature type="modified residue" description="Phosphoserine" evidence="5">
    <location>
        <position position="87"/>
    </location>
</feature>
<feature type="modified residue" description="Phosphoserine" evidence="5">
    <location>
        <position position="147"/>
    </location>
</feature>
<feature type="modified residue" description="Phosphoserine" evidence="5">
    <location>
        <position position="377"/>
    </location>
</feature>
<feature type="modified residue" description="Phosphothreonine" evidence="5">
    <location>
        <position position="384"/>
    </location>
</feature>
<feature type="sequence conflict" description="In Ref. 4; AAQ22432." evidence="7" ref="4">
    <original>E</original>
    <variation>G</variation>
    <location>
        <position position="49"/>
    </location>
</feature>
<feature type="sequence conflict" description="In Ref. 4; AAQ22432." evidence="7" ref="4">
    <original>D</original>
    <variation>G</variation>
    <location>
        <position position="91"/>
    </location>
</feature>
<feature type="sequence conflict" description="In Ref. 4; AAQ22432." evidence="7" ref="4">
    <original>R</original>
    <variation>G</variation>
    <location>
        <position position="378"/>
    </location>
</feature>
<feature type="sequence conflict" description="In Ref. 1; CAB64388." evidence="7" ref="1">
    <original>A</original>
    <variation>R</variation>
    <location>
        <position position="858"/>
    </location>
</feature>
<feature type="sequence conflict" description="In Ref. 4; AAQ22432." evidence="7" ref="4">
    <original>S</original>
    <variation>F</variation>
    <location>
        <position position="911"/>
    </location>
</feature>
<name>BAB2_DROME</name>
<organism evidence="8">
    <name type="scientific">Drosophila melanogaster</name>
    <name type="common">Fruit fly</name>
    <dbReference type="NCBI Taxonomy" id="7227"/>
    <lineage>
        <taxon>Eukaryota</taxon>
        <taxon>Metazoa</taxon>
        <taxon>Ecdysozoa</taxon>
        <taxon>Arthropoda</taxon>
        <taxon>Hexapoda</taxon>
        <taxon>Insecta</taxon>
        <taxon>Pterygota</taxon>
        <taxon>Neoptera</taxon>
        <taxon>Endopterygota</taxon>
        <taxon>Diptera</taxon>
        <taxon>Brachycera</taxon>
        <taxon>Muscomorpha</taxon>
        <taxon>Ephydroidea</taxon>
        <taxon>Drosophilidae</taxon>
        <taxon>Drosophila</taxon>
        <taxon>Sophophora</taxon>
    </lineage>
</organism>
<gene>
    <name type="primary">bab2</name>
    <name type="synonym">BtbII</name>
    <name type="ORF">CG9102</name>
</gene>
<protein>
    <recommendedName>
        <fullName>Protein bric-a-brac 2</fullName>
    </recommendedName>
</protein>
<keyword id="KW-0238">DNA-binding</keyword>
<keyword id="KW-0539">Nucleus</keyword>
<keyword id="KW-0597">Phosphoprotein</keyword>
<keyword id="KW-1185">Reference proteome</keyword>
<keyword id="KW-0804">Transcription</keyword>
<keyword id="KW-0805">Transcription regulation</keyword>
<proteinExistence type="evidence at protein level"/>